<gene>
    <name evidence="1" type="primary">pnp</name>
    <name type="ordered locus">Synpcc7942_2440</name>
</gene>
<accession>Q31KE9</accession>
<comment type="function">
    <text evidence="1">Involved in mRNA degradation. Catalyzes the phosphorolysis of single-stranded polyribonucleotides processively in the 3'- to 5'-direction.</text>
</comment>
<comment type="catalytic activity">
    <reaction evidence="1">
        <text>RNA(n+1) + phosphate = RNA(n) + a ribonucleoside 5'-diphosphate</text>
        <dbReference type="Rhea" id="RHEA:22096"/>
        <dbReference type="Rhea" id="RHEA-COMP:14527"/>
        <dbReference type="Rhea" id="RHEA-COMP:17342"/>
        <dbReference type="ChEBI" id="CHEBI:43474"/>
        <dbReference type="ChEBI" id="CHEBI:57930"/>
        <dbReference type="ChEBI" id="CHEBI:140395"/>
        <dbReference type="EC" id="2.7.7.8"/>
    </reaction>
</comment>
<comment type="cofactor">
    <cofactor evidence="1">
        <name>Mg(2+)</name>
        <dbReference type="ChEBI" id="CHEBI:18420"/>
    </cofactor>
</comment>
<comment type="subcellular location">
    <subcellularLocation>
        <location evidence="1">Cytoplasm</location>
    </subcellularLocation>
</comment>
<comment type="similarity">
    <text evidence="1">Belongs to the polyribonucleotide nucleotidyltransferase family.</text>
</comment>
<dbReference type="EC" id="2.7.7.8" evidence="1"/>
<dbReference type="EMBL" id="CP000100">
    <property type="protein sequence ID" value="ABB58470.1"/>
    <property type="molecule type" value="Genomic_DNA"/>
</dbReference>
<dbReference type="RefSeq" id="WP_011378463.1">
    <property type="nucleotide sequence ID" value="NZ_JACJTX010000001.1"/>
</dbReference>
<dbReference type="SMR" id="Q31KE9"/>
<dbReference type="STRING" id="1140.Synpcc7942_2440"/>
<dbReference type="PaxDb" id="1140-Synpcc7942_2440"/>
<dbReference type="GeneID" id="72431330"/>
<dbReference type="KEGG" id="syf:Synpcc7942_2440"/>
<dbReference type="eggNOG" id="COG1185">
    <property type="taxonomic scope" value="Bacteria"/>
</dbReference>
<dbReference type="HOGENOM" id="CLU_004217_2_2_3"/>
<dbReference type="OrthoDB" id="9804305at2"/>
<dbReference type="BioCyc" id="SYNEL:SYNPCC7942_2440-MONOMER"/>
<dbReference type="Proteomes" id="UP000889800">
    <property type="component" value="Chromosome"/>
</dbReference>
<dbReference type="GO" id="GO:0005829">
    <property type="term" value="C:cytosol"/>
    <property type="evidence" value="ECO:0007669"/>
    <property type="project" value="TreeGrafter"/>
</dbReference>
<dbReference type="GO" id="GO:0000175">
    <property type="term" value="F:3'-5'-RNA exonuclease activity"/>
    <property type="evidence" value="ECO:0007669"/>
    <property type="project" value="TreeGrafter"/>
</dbReference>
<dbReference type="GO" id="GO:0000287">
    <property type="term" value="F:magnesium ion binding"/>
    <property type="evidence" value="ECO:0007669"/>
    <property type="project" value="UniProtKB-UniRule"/>
</dbReference>
<dbReference type="GO" id="GO:0004654">
    <property type="term" value="F:polyribonucleotide nucleotidyltransferase activity"/>
    <property type="evidence" value="ECO:0007669"/>
    <property type="project" value="UniProtKB-UniRule"/>
</dbReference>
<dbReference type="GO" id="GO:0003723">
    <property type="term" value="F:RNA binding"/>
    <property type="evidence" value="ECO:0007669"/>
    <property type="project" value="UniProtKB-UniRule"/>
</dbReference>
<dbReference type="GO" id="GO:0006402">
    <property type="term" value="P:mRNA catabolic process"/>
    <property type="evidence" value="ECO:0007669"/>
    <property type="project" value="UniProtKB-UniRule"/>
</dbReference>
<dbReference type="GO" id="GO:0006396">
    <property type="term" value="P:RNA processing"/>
    <property type="evidence" value="ECO:0007669"/>
    <property type="project" value="InterPro"/>
</dbReference>
<dbReference type="CDD" id="cd02393">
    <property type="entry name" value="KH-I_PNPase"/>
    <property type="match status" value="1"/>
</dbReference>
<dbReference type="CDD" id="cd11363">
    <property type="entry name" value="RNase_PH_PNPase_1"/>
    <property type="match status" value="1"/>
</dbReference>
<dbReference type="CDD" id="cd11364">
    <property type="entry name" value="RNase_PH_PNPase_2"/>
    <property type="match status" value="1"/>
</dbReference>
<dbReference type="CDD" id="cd04472">
    <property type="entry name" value="S1_PNPase"/>
    <property type="match status" value="1"/>
</dbReference>
<dbReference type="FunFam" id="2.40.50.140:FF:000023">
    <property type="entry name" value="Polyribonucleotide nucleotidyltransferase"/>
    <property type="match status" value="1"/>
</dbReference>
<dbReference type="FunFam" id="3.30.1370.10:FF:000001">
    <property type="entry name" value="Polyribonucleotide nucleotidyltransferase"/>
    <property type="match status" value="1"/>
</dbReference>
<dbReference type="FunFam" id="3.30.230.70:FF:000001">
    <property type="entry name" value="Polyribonucleotide nucleotidyltransferase"/>
    <property type="match status" value="1"/>
</dbReference>
<dbReference type="FunFam" id="3.30.230.70:FF:000002">
    <property type="entry name" value="Polyribonucleotide nucleotidyltransferase"/>
    <property type="match status" value="1"/>
</dbReference>
<dbReference type="Gene3D" id="3.30.230.70">
    <property type="entry name" value="GHMP Kinase, N-terminal domain"/>
    <property type="match status" value="2"/>
</dbReference>
<dbReference type="Gene3D" id="3.30.1370.10">
    <property type="entry name" value="K Homology domain, type 1"/>
    <property type="match status" value="1"/>
</dbReference>
<dbReference type="Gene3D" id="2.40.50.140">
    <property type="entry name" value="Nucleic acid-binding proteins"/>
    <property type="match status" value="1"/>
</dbReference>
<dbReference type="HAMAP" id="MF_01595">
    <property type="entry name" value="PNPase"/>
    <property type="match status" value="1"/>
</dbReference>
<dbReference type="InterPro" id="IPR001247">
    <property type="entry name" value="ExoRNase_PH_dom1"/>
</dbReference>
<dbReference type="InterPro" id="IPR015847">
    <property type="entry name" value="ExoRNase_PH_dom2"/>
</dbReference>
<dbReference type="InterPro" id="IPR036345">
    <property type="entry name" value="ExoRNase_PH_dom2_sf"/>
</dbReference>
<dbReference type="InterPro" id="IPR004087">
    <property type="entry name" value="KH_dom"/>
</dbReference>
<dbReference type="InterPro" id="IPR004088">
    <property type="entry name" value="KH_dom_type_1"/>
</dbReference>
<dbReference type="InterPro" id="IPR036612">
    <property type="entry name" value="KH_dom_type_1_sf"/>
</dbReference>
<dbReference type="InterPro" id="IPR012340">
    <property type="entry name" value="NA-bd_OB-fold"/>
</dbReference>
<dbReference type="InterPro" id="IPR012162">
    <property type="entry name" value="PNPase"/>
</dbReference>
<dbReference type="InterPro" id="IPR027408">
    <property type="entry name" value="PNPase/RNase_PH_dom_sf"/>
</dbReference>
<dbReference type="InterPro" id="IPR015848">
    <property type="entry name" value="PNPase_PH_RNA-bd_bac/org-type"/>
</dbReference>
<dbReference type="InterPro" id="IPR036456">
    <property type="entry name" value="PNPase_PH_RNA-bd_sf"/>
</dbReference>
<dbReference type="InterPro" id="IPR020568">
    <property type="entry name" value="Ribosomal_Su5_D2-typ_SF"/>
</dbReference>
<dbReference type="InterPro" id="IPR003029">
    <property type="entry name" value="S1_domain"/>
</dbReference>
<dbReference type="NCBIfam" id="TIGR03591">
    <property type="entry name" value="polynuc_phos"/>
    <property type="match status" value="1"/>
</dbReference>
<dbReference type="NCBIfam" id="NF008805">
    <property type="entry name" value="PRK11824.1"/>
    <property type="match status" value="1"/>
</dbReference>
<dbReference type="PANTHER" id="PTHR11252">
    <property type="entry name" value="POLYRIBONUCLEOTIDE NUCLEOTIDYLTRANSFERASE"/>
    <property type="match status" value="1"/>
</dbReference>
<dbReference type="PANTHER" id="PTHR11252:SF0">
    <property type="entry name" value="POLYRIBONUCLEOTIDE NUCLEOTIDYLTRANSFERASE 1, MITOCHONDRIAL"/>
    <property type="match status" value="1"/>
</dbReference>
<dbReference type="Pfam" id="PF00013">
    <property type="entry name" value="KH_1"/>
    <property type="match status" value="1"/>
</dbReference>
<dbReference type="Pfam" id="PF03726">
    <property type="entry name" value="PNPase"/>
    <property type="match status" value="1"/>
</dbReference>
<dbReference type="Pfam" id="PF01138">
    <property type="entry name" value="RNase_PH"/>
    <property type="match status" value="2"/>
</dbReference>
<dbReference type="Pfam" id="PF03725">
    <property type="entry name" value="RNase_PH_C"/>
    <property type="match status" value="1"/>
</dbReference>
<dbReference type="Pfam" id="PF00575">
    <property type="entry name" value="S1"/>
    <property type="match status" value="1"/>
</dbReference>
<dbReference type="PIRSF" id="PIRSF005499">
    <property type="entry name" value="PNPase"/>
    <property type="match status" value="1"/>
</dbReference>
<dbReference type="SMART" id="SM00322">
    <property type="entry name" value="KH"/>
    <property type="match status" value="1"/>
</dbReference>
<dbReference type="SMART" id="SM00316">
    <property type="entry name" value="S1"/>
    <property type="match status" value="1"/>
</dbReference>
<dbReference type="SUPFAM" id="SSF54791">
    <property type="entry name" value="Eukaryotic type KH-domain (KH-domain type I)"/>
    <property type="match status" value="1"/>
</dbReference>
<dbReference type="SUPFAM" id="SSF50249">
    <property type="entry name" value="Nucleic acid-binding proteins"/>
    <property type="match status" value="1"/>
</dbReference>
<dbReference type="SUPFAM" id="SSF46915">
    <property type="entry name" value="Polynucleotide phosphorylase/guanosine pentaphosphate synthase (PNPase/GPSI), domain 3"/>
    <property type="match status" value="1"/>
</dbReference>
<dbReference type="SUPFAM" id="SSF55666">
    <property type="entry name" value="Ribonuclease PH domain 2-like"/>
    <property type="match status" value="2"/>
</dbReference>
<dbReference type="SUPFAM" id="SSF54211">
    <property type="entry name" value="Ribosomal protein S5 domain 2-like"/>
    <property type="match status" value="2"/>
</dbReference>
<dbReference type="PROSITE" id="PS50084">
    <property type="entry name" value="KH_TYPE_1"/>
    <property type="match status" value="1"/>
</dbReference>
<dbReference type="PROSITE" id="PS50126">
    <property type="entry name" value="S1"/>
    <property type="match status" value="1"/>
</dbReference>
<proteinExistence type="inferred from homology"/>
<organism>
    <name type="scientific">Synechococcus elongatus (strain ATCC 33912 / PCC 7942 / FACHB-805)</name>
    <name type="common">Anacystis nidulans R2</name>
    <dbReference type="NCBI Taxonomy" id="1140"/>
    <lineage>
        <taxon>Bacteria</taxon>
        <taxon>Bacillati</taxon>
        <taxon>Cyanobacteriota</taxon>
        <taxon>Cyanophyceae</taxon>
        <taxon>Synechococcales</taxon>
        <taxon>Synechococcaceae</taxon>
        <taxon>Synechococcus</taxon>
    </lineage>
</organism>
<keyword id="KW-0963">Cytoplasm</keyword>
<keyword id="KW-0460">Magnesium</keyword>
<keyword id="KW-0479">Metal-binding</keyword>
<keyword id="KW-0548">Nucleotidyltransferase</keyword>
<keyword id="KW-1185">Reference proteome</keyword>
<keyword id="KW-0694">RNA-binding</keyword>
<keyword id="KW-0808">Transferase</keyword>
<feature type="chain" id="PRO_0000329901" description="Polyribonucleotide nucleotidyltransferase">
    <location>
        <begin position="1"/>
        <end position="716"/>
    </location>
</feature>
<feature type="domain" description="KH" evidence="1">
    <location>
        <begin position="562"/>
        <end position="621"/>
    </location>
</feature>
<feature type="domain" description="S1 motif" evidence="1">
    <location>
        <begin position="631"/>
        <end position="699"/>
    </location>
</feature>
<feature type="binding site" evidence="1">
    <location>
        <position position="495"/>
    </location>
    <ligand>
        <name>Mg(2+)</name>
        <dbReference type="ChEBI" id="CHEBI:18420"/>
    </ligand>
</feature>
<feature type="binding site" evidence="1">
    <location>
        <position position="501"/>
    </location>
    <ligand>
        <name>Mg(2+)</name>
        <dbReference type="ChEBI" id="CHEBI:18420"/>
    </ligand>
</feature>
<sequence>MPQLSKSLSFDGRDIRLELGLFAPQAGGSVLISSGDTAVLVAATRSTAREGIDFLPLTVDYEERMYAAGRIPGGFLRREGRPPERATLTSRLIDRPLRPLFPSWLRDDLQVVATTLSMDETVPPDVLAVTGASIATLVAKIPFYGPMAAVRVGLVGDDFIINPTYREIEKGDLDLVVAGTPAGVIMVEAGANQLPEADVIEAIDFGYEAVQELIKAQQSLLAELGIEQILPEAPNADNTLENFVRDRASSGVQQVLQHFSFTKSERDAALDEVKASVVEAIAALPEEDPVRSVTAAEPKALGNTFKALTKTLMRQQILRDGVRVDGRKLDQVRPISSQVGLLPPRVHGSGLFQRGLTQVLSIATLGTPGDAQELDDLHPDTQKRYLHHYNMPPYSVGETRPMRSPGRREIGHGALAERALLPVLPSKEEFPYVIRVVSEVLSSNGSTSMGSVCGSTLALMDAGVPIKKPVSGAAMGLIREGDEYRVLTDIQGIEDFLGDMDFKVAGTDQGITALQMDMKIHGLPLEIIADAINQAKPARLHILNKMLEAIATPRADLSTYAPRLFRIQINPEQIGLVIGPGGKTIRSITEQTGAKIDIEDTGAVTISAVDADSALRAKSIIEGMTRTITAGDVYIGKVTRIIPIGAFVEFLPGKEGMIHISQIADYRVARVEDELTVGDEVVVKVREIDQKGRVNLTRKGIDPEEVSAARAAVEAS</sequence>
<evidence type="ECO:0000255" key="1">
    <source>
        <dbReference type="HAMAP-Rule" id="MF_01595"/>
    </source>
</evidence>
<protein>
    <recommendedName>
        <fullName evidence="1">Polyribonucleotide nucleotidyltransferase</fullName>
        <ecNumber evidence="1">2.7.7.8</ecNumber>
    </recommendedName>
    <alternativeName>
        <fullName evidence="1">Polynucleotide phosphorylase</fullName>
        <shortName evidence="1">PNPase</shortName>
    </alternativeName>
</protein>
<reference key="1">
    <citation type="submission" date="2005-08" db="EMBL/GenBank/DDBJ databases">
        <title>Complete sequence of chromosome 1 of Synechococcus elongatus PCC 7942.</title>
        <authorList>
            <consortium name="US DOE Joint Genome Institute"/>
            <person name="Copeland A."/>
            <person name="Lucas S."/>
            <person name="Lapidus A."/>
            <person name="Barry K."/>
            <person name="Detter J.C."/>
            <person name="Glavina T."/>
            <person name="Hammon N."/>
            <person name="Israni S."/>
            <person name="Pitluck S."/>
            <person name="Schmutz J."/>
            <person name="Larimer F."/>
            <person name="Land M."/>
            <person name="Kyrpides N."/>
            <person name="Lykidis A."/>
            <person name="Golden S."/>
            <person name="Richardson P."/>
        </authorList>
    </citation>
    <scope>NUCLEOTIDE SEQUENCE [LARGE SCALE GENOMIC DNA]</scope>
    <source>
        <strain>ATCC 33912 / PCC 7942 / FACHB-805</strain>
    </source>
</reference>
<name>PNP_SYNE7</name>